<feature type="chain" id="PRO_0000416939" description="UDP-N-acetylglucosamine--peptide N-acetylglucosaminyltransferase">
    <location>
        <begin position="1"/>
        <end position="1480"/>
    </location>
</feature>
<feature type="repeat" description="TPR 1" evidence="2">
    <location>
        <begin position="38"/>
        <end position="71"/>
    </location>
</feature>
<feature type="repeat" description="TPR 2" evidence="2">
    <location>
        <begin position="113"/>
        <end position="146"/>
    </location>
</feature>
<feature type="repeat" description="TPR 3" evidence="2">
    <location>
        <begin position="176"/>
        <end position="209"/>
    </location>
</feature>
<feature type="repeat" description="TPR 4" evidence="2">
    <location>
        <begin position="288"/>
        <end position="321"/>
    </location>
</feature>
<feature type="repeat" description="TPR 5" evidence="2">
    <location>
        <begin position="613"/>
        <end position="646"/>
    </location>
</feature>
<feature type="repeat" description="TPR 6" evidence="2">
    <location>
        <begin position="648"/>
        <end position="680"/>
    </location>
</feature>
<feature type="region of interest" description="Disordered" evidence="3">
    <location>
        <begin position="468"/>
        <end position="497"/>
    </location>
</feature>
<feature type="region of interest" description="Disordered" evidence="3">
    <location>
        <begin position="1093"/>
        <end position="1128"/>
    </location>
</feature>
<feature type="compositionally biased region" description="Basic and acidic residues" evidence="3">
    <location>
        <begin position="468"/>
        <end position="485"/>
    </location>
</feature>
<feature type="compositionally biased region" description="Polar residues" evidence="3">
    <location>
        <begin position="1099"/>
        <end position="1112"/>
    </location>
</feature>
<feature type="binding site" evidence="1">
    <location>
        <position position="1269"/>
    </location>
    <ligand>
        <name>UDP</name>
        <dbReference type="ChEBI" id="CHEBI:58223"/>
    </ligand>
</feature>
<feature type="binding site" evidence="1">
    <location>
        <position position="1272"/>
    </location>
    <ligand>
        <name>UDP</name>
        <dbReference type="ChEBI" id="CHEBI:58223"/>
    </ligand>
</feature>
<feature type="binding site" evidence="1">
    <location>
        <begin position="1333"/>
        <end position="1336"/>
    </location>
    <ligand>
        <name>UDP</name>
        <dbReference type="ChEBI" id="CHEBI:58223"/>
    </ligand>
</feature>
<feature type="binding site" evidence="1">
    <location>
        <begin position="1351"/>
        <end position="1353"/>
    </location>
    <ligand>
        <name>UDP</name>
        <dbReference type="ChEBI" id="CHEBI:58223"/>
    </ligand>
</feature>
<feature type="binding site" evidence="1">
    <location>
        <position position="1357"/>
    </location>
    <ligand>
        <name>UDP</name>
        <dbReference type="ChEBI" id="CHEBI:58223"/>
    </ligand>
</feature>
<evidence type="ECO:0000250" key="1">
    <source>
        <dbReference type="UniProtKB" id="O15294"/>
    </source>
</evidence>
<evidence type="ECO:0000255" key="2"/>
<evidence type="ECO:0000256" key="3">
    <source>
        <dbReference type="SAM" id="MobiDB-lite"/>
    </source>
</evidence>
<evidence type="ECO:0000269" key="4">
    <source>
    </source>
</evidence>
<evidence type="ECO:0000303" key="5">
    <source>
    </source>
</evidence>
<evidence type="ECO:0000305" key="6"/>
<evidence type="ECO:0000312" key="7">
    <source>
        <dbReference type="EMBL" id="EDO79630.1"/>
    </source>
</evidence>
<protein>
    <recommendedName>
        <fullName>UDP-N-acetylglucosamine--peptide N-acetylglucosaminyltransferase</fullName>
        <shortName evidence="5">GlOGT</shortName>
        <ecNumber evidence="4">2.4.1.255</ecNumber>
    </recommendedName>
    <alternativeName>
        <fullName evidence="7">O-linked GlcNAc transferase</fullName>
    </alternativeName>
    <alternativeName>
        <fullName evidence="5">O-linked N-acetylglucosaminyltransferase</fullName>
    </alternativeName>
</protein>
<dbReference type="EC" id="2.4.1.255" evidence="4"/>
<dbReference type="EMBL" id="AACB02000015">
    <property type="protein sequence ID" value="EDO79630.1"/>
    <property type="molecule type" value="Genomic_DNA"/>
</dbReference>
<dbReference type="RefSeq" id="XP_001707304.1">
    <property type="nucleotide sequence ID" value="XM_001707252.1"/>
</dbReference>
<dbReference type="SMR" id="A8BFN4"/>
<dbReference type="STRING" id="184922.A8BFN4"/>
<dbReference type="CAZy" id="GT41">
    <property type="family name" value="Glycosyltransferase Family 41"/>
</dbReference>
<dbReference type="EnsemblProtists" id="EDO79630">
    <property type="protein sequence ID" value="EDO79630"/>
    <property type="gene ID" value="GL50803_12081"/>
</dbReference>
<dbReference type="GeneID" id="5700203"/>
<dbReference type="KEGG" id="gla:GL50803_0012081"/>
<dbReference type="VEuPathDB" id="GiardiaDB:GL50803_12081"/>
<dbReference type="HOGENOM" id="CLU_249719_0_0_1"/>
<dbReference type="OMA" id="CDDINSI"/>
<dbReference type="SABIO-RK" id="A8BFN4"/>
<dbReference type="UniPathway" id="UPA00378"/>
<dbReference type="GO" id="GO:0005737">
    <property type="term" value="C:cytoplasm"/>
    <property type="evidence" value="ECO:0007669"/>
    <property type="project" value="UniProtKB-SubCell"/>
</dbReference>
<dbReference type="GO" id="GO:0005634">
    <property type="term" value="C:nucleus"/>
    <property type="evidence" value="ECO:0007669"/>
    <property type="project" value="UniProtKB-SubCell"/>
</dbReference>
<dbReference type="GO" id="GO:0097363">
    <property type="term" value="F:protein O-acetylglucosaminyltransferase activity"/>
    <property type="evidence" value="ECO:0007669"/>
    <property type="project" value="UniProtKB-EC"/>
</dbReference>
<dbReference type="GO" id="GO:0006493">
    <property type="term" value="P:protein O-linked glycosylation"/>
    <property type="evidence" value="ECO:0007669"/>
    <property type="project" value="InterPro"/>
</dbReference>
<dbReference type="Gene3D" id="3.30.720.150">
    <property type="match status" value="1"/>
</dbReference>
<dbReference type="Gene3D" id="3.40.50.11380">
    <property type="match status" value="2"/>
</dbReference>
<dbReference type="Gene3D" id="3.40.50.2000">
    <property type="entry name" value="Glycogen Phosphorylase B"/>
    <property type="match status" value="1"/>
</dbReference>
<dbReference type="Gene3D" id="1.25.40.10">
    <property type="entry name" value="Tetratricopeptide repeat domain"/>
    <property type="match status" value="3"/>
</dbReference>
<dbReference type="InterPro" id="IPR037919">
    <property type="entry name" value="OGT"/>
</dbReference>
<dbReference type="InterPro" id="IPR029489">
    <property type="entry name" value="OGT/SEC/SPY_C"/>
</dbReference>
<dbReference type="InterPro" id="IPR011990">
    <property type="entry name" value="TPR-like_helical_dom_sf"/>
</dbReference>
<dbReference type="InterPro" id="IPR019734">
    <property type="entry name" value="TPR_rpt"/>
</dbReference>
<dbReference type="PANTHER" id="PTHR44366">
    <property type="entry name" value="UDP-N-ACETYLGLUCOSAMINE--PEPTIDE N-ACETYLGLUCOSAMINYLTRANSFERASE 110 KDA SUBUNIT"/>
    <property type="match status" value="1"/>
</dbReference>
<dbReference type="PANTHER" id="PTHR44366:SF1">
    <property type="entry name" value="UDP-N-ACETYLGLUCOSAMINE--PEPTIDE N-ACETYLGLUCOSAMINYLTRANSFERASE 110 KDA SUBUNIT"/>
    <property type="match status" value="1"/>
</dbReference>
<dbReference type="Pfam" id="PF13844">
    <property type="entry name" value="Glyco_transf_41"/>
    <property type="match status" value="2"/>
</dbReference>
<dbReference type="Pfam" id="PF00515">
    <property type="entry name" value="TPR_1"/>
    <property type="match status" value="1"/>
</dbReference>
<dbReference type="Pfam" id="PF13181">
    <property type="entry name" value="TPR_8"/>
    <property type="match status" value="2"/>
</dbReference>
<dbReference type="SMART" id="SM00028">
    <property type="entry name" value="TPR"/>
    <property type="match status" value="8"/>
</dbReference>
<dbReference type="SUPFAM" id="SSF48452">
    <property type="entry name" value="TPR-like"/>
    <property type="match status" value="3"/>
</dbReference>
<dbReference type="PROSITE" id="PS50005">
    <property type="entry name" value="TPR"/>
    <property type="match status" value="6"/>
</dbReference>
<dbReference type="PROSITE" id="PS50293">
    <property type="entry name" value="TPR_REGION"/>
    <property type="match status" value="4"/>
</dbReference>
<accession>A8BFN4</accession>
<organism>
    <name type="scientific">Giardia intestinalis (strain ATCC 50803 / WB clone C6)</name>
    <name type="common">Giardia lamblia</name>
    <dbReference type="NCBI Taxonomy" id="184922"/>
    <lineage>
        <taxon>Eukaryota</taxon>
        <taxon>Metamonada</taxon>
        <taxon>Diplomonadida</taxon>
        <taxon>Hexamitidae</taxon>
        <taxon>Giardiinae</taxon>
        <taxon>Giardia</taxon>
    </lineage>
</organism>
<sequence>MVALMDKIAQLFRNKQYSDLIQLIDKQLHAKNEPEALIFLYAIQGEISFKQKDWIQAFAAYEKAVAESKQKGLPTQVYAQIVQRQMIILLRLQMLDTAFGLFSENQSVSVDNVQVLAQLALLYLMCERYSEAEKLLSSIVESSTSNTITLSKQFKEDIGPFKELFGVLDTYDTFLATILNNLAICNSKLGNHTLAFDQFQQALDIIKDPEKITRPPLSPITVLFDNCVSTVDEDKEKALKVEHHMLTINESKENQEDDTVLSLLRDGCTLIPSSTLGTHLPLIIELHSTICYNIGKLELTLGNLDRSVNHFKKSIEYQPSFARYVALGLVYRDMRNFYDAAEMLTKAVDSCVGISNLCLGEVVYNLGILVSEELKMPYKSLQFFDEATVLFIRGEFSAGAILSRIMKANSLTTITTATAVSSDWEFIMAFLNTLYLDLCAFSKDQGFNVEAAFTGTNAISFNLPITEPQEKESPKSDKIASEKPLVESNPGRSRTPSSMNDVYMLSAENLSFSLLESSFAQKETITSRLFPTFQAETKRYLAILYTNLGLIYYRIGIPTYYKQARRCFEVAIWFDNDCVFAINYLSVLLLKENSKTLAIEGLLKCTRLFPEYYEPFYNLGNILKADEENKKALQYYSRAIELNPRFLDGYLARGVLYAELHRFETAYLDFSKCIELDPDNRHAFCNYIHMKQILGIFHNDTLDMRKISKIIDDYIHEYLTVQNAINKGVVLPSHPLPPIMPYHCYLYRLSSSQLRFICQRYSEQNVNWVKQNIDMMSTPLLDLSIHQRPMPPSIGLINSVSSSSQLQLSMLPLNQSAADSMVPLAMLTPGPTLCTAIGFQSIKSVIRDSQHITHGPIFSYDRALITLARSKHSSKCPISYIDIVNLKSPLRLGVLCDDINSIPIGCILESWLRNIDPKVASLSIYSTVASDKSALRTSLEAHCSNFIDFTNYKYQNNPFLCAQRINGDGICIMISMCQHNCGLEGRILAMRPAPIQISYWTHGGTTNSNYLDYILADQYCIPPGYAHLYSEHVITMPGCFICPSHSMHYSNAILLEEHADILKVTVEEVRSLIQDSKPDIDVNHHSAAGENILSLDGSDATSSSVDSGIGSRTHSEAPIGGGDKDEGAHSSKILELELELAEIAKMKGETKNGVSTNSASEGRDELLMNDRILITGDNVFFQVQPIRNGRLVGGRDRSMIKKMEPLLKAIYPLQRIASEAAVPASMEKSENNSDLTSHRVCLELPLYRKNIRALYGIPANCFLFCTFNQVYKFDMGTLGIIAALLRSVPNAYYALLKFPPASQLHIEAFFRHKAPDILDRVIFLSMLPMKVEHIRRYLAVDVFVDTLKCNGSTIVLDALWSGVPVVGFVGEYILSRKTLSFLSVLECKDLICASQGEAVLLCTRLAVDSGYYFSVRKRILKNRSNLFNISRWCDNFVLTMMLAYKNWIFGGKPTSFSTERVIANVKSQGFSWPLKSTGAQ</sequence>
<keyword id="KW-0963">Cytoplasm</keyword>
<keyword id="KW-0328">Glycosyltransferase</keyword>
<keyword id="KW-0539">Nucleus</keyword>
<keyword id="KW-0677">Repeat</keyword>
<keyword id="KW-0802">TPR repeat</keyword>
<keyword id="KW-0808">Transferase</keyword>
<proteinExistence type="evidence at protein level"/>
<reference key="1">
    <citation type="journal article" date="2007" name="Science">
        <title>Genomic minimalism in the early diverging intestinal parasite Giardia lamblia.</title>
        <authorList>
            <person name="Morrison H.G."/>
            <person name="McArthur A.G."/>
            <person name="Gillin F.D."/>
            <person name="Aley S.B."/>
            <person name="Adam R.D."/>
            <person name="Olsen G.J."/>
            <person name="Best A.A."/>
            <person name="Cande W.Z."/>
            <person name="Chen F."/>
            <person name="Cipriano M.J."/>
            <person name="Davids B.J."/>
            <person name="Dawson S.C."/>
            <person name="Elmendorf H.G."/>
            <person name="Hehl A.B."/>
            <person name="Holder M.E."/>
            <person name="Huse S.M."/>
            <person name="Kim U.U."/>
            <person name="Lasek-Nesselquist E."/>
            <person name="Manning G."/>
            <person name="Nigam A."/>
            <person name="Nixon J.E.J."/>
            <person name="Palm D."/>
            <person name="Passamaneck N.E."/>
            <person name="Prabhu A."/>
            <person name="Reich C.I."/>
            <person name="Reiner D.S."/>
            <person name="Samuelson J."/>
            <person name="Svard S.G."/>
            <person name="Sogin M.L."/>
        </authorList>
    </citation>
    <scope>NUCLEOTIDE SEQUENCE [LARGE SCALE GENOMIC DNA]</scope>
    <source>
        <strain>ATCC 50803 / WB clone C6</strain>
    </source>
</reference>
<reference key="2">
    <citation type="journal article" date="2009" name="Glycobiology">
        <title>Molecular characterization of nucleocytosolic O-GlcNAc transferases of Giardia lamblia and Cryptosporidium parvum.</title>
        <authorList>
            <person name="Banerjee S."/>
            <person name="Robbins P.W."/>
            <person name="Samuelson J."/>
        </authorList>
    </citation>
    <scope>FUNCTION</scope>
    <scope>CATALYTIC ACTIVITY</scope>
    <scope>BIOPHYSICOCHEMICAL PROPERTIES</scope>
    <scope>PATHWAY</scope>
    <scope>SUBCELLULAR LOCATION</scope>
    <source>
        <strain evidence="4">ATCC 50803 / WB clone C6</strain>
    </source>
</reference>
<comment type="function">
    <text evidence="4">Catalyzes the transfer of a single N-acetylglucosamine from UDP-GlcNAc to a serine or threonine residue in cytoplasmic and nuclear proteins resulting in their modification with a beta-linked N-acetylglucosamine (O-GlcNAc).</text>
</comment>
<comment type="catalytic activity">
    <reaction evidence="4">
        <text>L-seryl-[protein] + UDP-N-acetyl-alpha-D-glucosamine = 3-O-(N-acetyl-beta-D-glucosaminyl)-L-seryl-[protein] + UDP + H(+)</text>
        <dbReference type="Rhea" id="RHEA:48904"/>
        <dbReference type="Rhea" id="RHEA-COMP:9863"/>
        <dbReference type="Rhea" id="RHEA-COMP:12251"/>
        <dbReference type="ChEBI" id="CHEBI:15378"/>
        <dbReference type="ChEBI" id="CHEBI:29999"/>
        <dbReference type="ChEBI" id="CHEBI:57705"/>
        <dbReference type="ChEBI" id="CHEBI:58223"/>
        <dbReference type="ChEBI" id="CHEBI:90838"/>
        <dbReference type="EC" id="2.4.1.255"/>
    </reaction>
</comment>
<comment type="catalytic activity">
    <reaction evidence="4">
        <text>L-threonyl-[protein] + UDP-N-acetyl-alpha-D-glucosamine = 3-O-(N-acetyl-beta-D-glucosaminyl)-L-threonyl-[protein] + UDP + H(+)</text>
        <dbReference type="Rhea" id="RHEA:48908"/>
        <dbReference type="Rhea" id="RHEA-COMP:11060"/>
        <dbReference type="Rhea" id="RHEA-COMP:12252"/>
        <dbReference type="ChEBI" id="CHEBI:15378"/>
        <dbReference type="ChEBI" id="CHEBI:30013"/>
        <dbReference type="ChEBI" id="CHEBI:57705"/>
        <dbReference type="ChEBI" id="CHEBI:58223"/>
        <dbReference type="ChEBI" id="CHEBI:90840"/>
        <dbReference type="EC" id="2.4.1.255"/>
    </reaction>
</comment>
<comment type="biophysicochemical properties">
    <kinetics>
        <KM evidence="4">5.8 uM for UDP-GlcNAc</KM>
        <Vmax evidence="4">5.1 pmol/min/mg enzyme</Vmax>
    </kinetics>
</comment>
<comment type="pathway">
    <text evidence="4">Protein modification; protein glycosylation.</text>
</comment>
<comment type="subcellular location">
    <subcellularLocation>
        <location evidence="4">Cytoplasm</location>
    </subcellularLocation>
    <subcellularLocation>
        <location evidence="4">Nucleus</location>
    </subcellularLocation>
</comment>
<comment type="domain">
    <text evidence="1">The TPR repeat domain is required for substrate binding and oligomerization.</text>
</comment>
<comment type="similarity">
    <text evidence="6">Belongs to the glycosyltransferase 41 family. O-GlcNAc transferase subfamily.</text>
</comment>
<name>OGT1_GIAIC</name>
<gene>
    <name type="ORF">GL50803_12081</name>
</gene>